<sequence>MPTMRRTVSEIRSRAEGYEKTDDVSEKTSLADQEEVRTIFINQPQLTKFCNNHVSTAKYNIITFLPRFLYSQFRRAANSFFLFIALLQQIPDVSPTGRYTTLVPLLFILAVAAIKEIIEDIKRHKADNAVNKKQTQVLRNGAWEIVHWEKVAVGEIVKVTNGEHLPADLISLSSSEPQAMCYIETSNLDGETNLKIRQGLPATSDIKDVDSLMRISGRIECESPNRHLYDFVGNIRLDGHGTVPLGADQILLRGAQLRNTQWVHGIVVYTGHDTKLMQNSTSPPLKLSNVERITNVQILILFCILIAMSLVCSVGSAIWNRRHSGKDWYLNLNYGGASNFGLNFLTFIILFNNLIPISLLVTLEVVKFTQAYFINWDLDMHYEPTDTAAMARTSNLNEELGQVKYIFSDKTGTLTCNVMQFKKCTIAGVAYGHVPEPEDYGCSPDEWQNSQFGDEKTFSDSSLLENLQNNHPTAPIICEFLTMMAVCHTAVPEREGDKIIYQAASPDEGALVRAAKQLNFVFTGRTPDSVIIDSLGQEERYELLNVLEFTSARKRMSVIVRTPSGKLRLYCKGADTVIYDRLAETSKYKEITLKHLEQFATEGLRTLCFAVAEISESDFQEWRAVYQRASTSVQNRLLKLEESYELIEKNLQLLGATAIEDKLQDQVPETIETLMKADIKIWILTGDKQETAINIGHSCKLLKKNMGMIVINEGSLDGTRETLSRHCTTLGDALRKENDFALIIDGKTLKYALTFGVRQYFLDLALSCKAVICCRVSPLQKSEVVEMVKKQVKVVTLAIGDGANDVSMIQTAHVGVGISGNEGLQAANSSDYSIAQFKYLKNLLMIHGAWNYNRVSKCILYCFYKNIVLYIIEIWFAFVNGFSGQILFERWCIGLYNVMFTAMPPLTLGIFERSCRKENMLKYPELYKTSQNALDFNTKVFWVHCLNGLFHSVILFWFPLKALQYGTAFGNGKTSDYLLLGNFVYTFVVITVCLKAGLETSYWTWFSHIAIWGSIALWVVFFGIYSSLWPAIPMAPDMSGEAAMLFSSGVFWMGLLFIPVASLLLDVVYKVIKRTAFKTLVDEVQELEAKSQDPGAVVLGKSLTERAQLLKNVFKKNHVNLYRSESLQQNLLHGYAFSQDENGIVSQSEVIRAYDTTKQRPDEW</sequence>
<protein>
    <recommendedName>
        <fullName evidence="14">Phospholipid-transporting ATPase IA</fullName>
        <ecNumber evidence="4">7.6.2.1</ecNumber>
    </recommendedName>
    <alternativeName>
        <fullName>ATPase class I type 8A member 1</fullName>
    </alternativeName>
    <alternativeName>
        <fullName>Chromaffin granule ATPase II</fullName>
    </alternativeName>
    <alternativeName>
        <fullName>P4-ATPase flippase complex alpha subunit ATP8A1</fullName>
    </alternativeName>
</protein>
<reference key="1">
    <citation type="journal article" date="1999" name="Biochem. Biophys. Res. Commun.">
        <title>Cloning, expression, and chromosomal mapping of a human ATPase II gene, member of the third subfamily of P-type ATPases and orthologous to the presumed bovine and murine aminophospholipid translocase.</title>
        <authorList>
            <person name="Mouro I."/>
            <person name="Halleck M.S."/>
            <person name="Schlegel R.A."/>
            <person name="Mattei M.-G."/>
            <person name="Williamson P.L."/>
            <person name="Zachowski A."/>
            <person name="Devaux P."/>
            <person name="Cartron J.-P."/>
            <person name="Colin Y."/>
        </authorList>
    </citation>
    <scope>NUCLEOTIDE SEQUENCE [MRNA] (ISOFORMS 1 AND 2)</scope>
    <source>
        <tissue>Skeletal muscle</tissue>
    </source>
</reference>
<reference key="2">
    <citation type="journal article" date="2005" name="Nature">
        <title>Generation and annotation of the DNA sequences of human chromosomes 2 and 4.</title>
        <authorList>
            <person name="Hillier L.W."/>
            <person name="Graves T.A."/>
            <person name="Fulton R.S."/>
            <person name="Fulton L.A."/>
            <person name="Pepin K.H."/>
            <person name="Minx P."/>
            <person name="Wagner-McPherson C."/>
            <person name="Layman D."/>
            <person name="Wylie K."/>
            <person name="Sekhon M."/>
            <person name="Becker M.C."/>
            <person name="Fewell G.A."/>
            <person name="Delehaunty K.D."/>
            <person name="Miner T.L."/>
            <person name="Nash W.E."/>
            <person name="Kremitzki C."/>
            <person name="Oddy L."/>
            <person name="Du H."/>
            <person name="Sun H."/>
            <person name="Bradshaw-Cordum H."/>
            <person name="Ali J."/>
            <person name="Carter J."/>
            <person name="Cordes M."/>
            <person name="Harris A."/>
            <person name="Isak A."/>
            <person name="van Brunt A."/>
            <person name="Nguyen C."/>
            <person name="Du F."/>
            <person name="Courtney L."/>
            <person name="Kalicki J."/>
            <person name="Ozersky P."/>
            <person name="Abbott S."/>
            <person name="Armstrong J."/>
            <person name="Belter E.A."/>
            <person name="Caruso L."/>
            <person name="Cedroni M."/>
            <person name="Cotton M."/>
            <person name="Davidson T."/>
            <person name="Desai A."/>
            <person name="Elliott G."/>
            <person name="Erb T."/>
            <person name="Fronick C."/>
            <person name="Gaige T."/>
            <person name="Haakenson W."/>
            <person name="Haglund K."/>
            <person name="Holmes A."/>
            <person name="Harkins R."/>
            <person name="Kim K."/>
            <person name="Kruchowski S.S."/>
            <person name="Strong C.M."/>
            <person name="Grewal N."/>
            <person name="Goyea E."/>
            <person name="Hou S."/>
            <person name="Levy A."/>
            <person name="Martinka S."/>
            <person name="Mead K."/>
            <person name="McLellan M.D."/>
            <person name="Meyer R."/>
            <person name="Randall-Maher J."/>
            <person name="Tomlinson C."/>
            <person name="Dauphin-Kohlberg S."/>
            <person name="Kozlowicz-Reilly A."/>
            <person name="Shah N."/>
            <person name="Swearengen-Shahid S."/>
            <person name="Snider J."/>
            <person name="Strong J.T."/>
            <person name="Thompson J."/>
            <person name="Yoakum M."/>
            <person name="Leonard S."/>
            <person name="Pearman C."/>
            <person name="Trani L."/>
            <person name="Radionenko M."/>
            <person name="Waligorski J.E."/>
            <person name="Wang C."/>
            <person name="Rock S.M."/>
            <person name="Tin-Wollam A.-M."/>
            <person name="Maupin R."/>
            <person name="Latreille P."/>
            <person name="Wendl M.C."/>
            <person name="Yang S.-P."/>
            <person name="Pohl C."/>
            <person name="Wallis J.W."/>
            <person name="Spieth J."/>
            <person name="Bieri T.A."/>
            <person name="Berkowicz N."/>
            <person name="Nelson J.O."/>
            <person name="Osborne J."/>
            <person name="Ding L."/>
            <person name="Meyer R."/>
            <person name="Sabo A."/>
            <person name="Shotland Y."/>
            <person name="Sinha P."/>
            <person name="Wohldmann P.E."/>
            <person name="Cook L.L."/>
            <person name="Hickenbotham M.T."/>
            <person name="Eldred J."/>
            <person name="Williams D."/>
            <person name="Jones T.A."/>
            <person name="She X."/>
            <person name="Ciccarelli F.D."/>
            <person name="Izaurralde E."/>
            <person name="Taylor J."/>
            <person name="Schmutz J."/>
            <person name="Myers R.M."/>
            <person name="Cox D.R."/>
            <person name="Huang X."/>
            <person name="McPherson J.D."/>
            <person name="Mardis E.R."/>
            <person name="Clifton S.W."/>
            <person name="Warren W.C."/>
            <person name="Chinwalla A.T."/>
            <person name="Eddy S.R."/>
            <person name="Marra M.A."/>
            <person name="Ovcharenko I."/>
            <person name="Furey T.S."/>
            <person name="Miller W."/>
            <person name="Eichler E.E."/>
            <person name="Bork P."/>
            <person name="Suyama M."/>
            <person name="Torrents D."/>
            <person name="Waterston R.H."/>
            <person name="Wilson R.K."/>
        </authorList>
    </citation>
    <scope>NUCLEOTIDE SEQUENCE [LARGE SCALE GENOMIC DNA]</scope>
</reference>
<reference key="3">
    <citation type="submission" date="2005-07" db="EMBL/GenBank/DDBJ databases">
        <authorList>
            <person name="Mural R.J."/>
            <person name="Istrail S."/>
            <person name="Sutton G."/>
            <person name="Florea L."/>
            <person name="Halpern A.L."/>
            <person name="Mobarry C.M."/>
            <person name="Lippert R."/>
            <person name="Walenz B."/>
            <person name="Shatkay H."/>
            <person name="Dew I."/>
            <person name="Miller J.R."/>
            <person name="Flanigan M.J."/>
            <person name="Edwards N.J."/>
            <person name="Bolanos R."/>
            <person name="Fasulo D."/>
            <person name="Halldorsson B.V."/>
            <person name="Hannenhalli S."/>
            <person name="Turner R."/>
            <person name="Yooseph S."/>
            <person name="Lu F."/>
            <person name="Nusskern D.R."/>
            <person name="Shue B.C."/>
            <person name="Zheng X.H."/>
            <person name="Zhong F."/>
            <person name="Delcher A.L."/>
            <person name="Huson D.H."/>
            <person name="Kravitz S.A."/>
            <person name="Mouchard L."/>
            <person name="Reinert K."/>
            <person name="Remington K.A."/>
            <person name="Clark A.G."/>
            <person name="Waterman M.S."/>
            <person name="Eichler E.E."/>
            <person name="Adams M.D."/>
            <person name="Hunkapiller M.W."/>
            <person name="Myers E.W."/>
            <person name="Venter J.C."/>
        </authorList>
    </citation>
    <scope>NUCLEOTIDE SEQUENCE [LARGE SCALE GENOMIC DNA]</scope>
</reference>
<reference key="4">
    <citation type="journal article" date="2004" name="Genome Res.">
        <title>The status, quality, and expansion of the NIH full-length cDNA project: the Mammalian Gene Collection (MGC).</title>
        <authorList>
            <consortium name="The MGC Project Team"/>
        </authorList>
    </citation>
    <scope>NUCLEOTIDE SEQUENCE [LARGE SCALE MRNA] (ISOFORM 3)</scope>
</reference>
<reference key="5">
    <citation type="submission" date="1998-04" db="EMBL/GenBank/DDBJ databases">
        <title>cDNA cloning of human ATPaseII.</title>
        <authorList>
            <person name="Osada S."/>
            <person name="Nakanishi Y."/>
        </authorList>
    </citation>
    <scope>NUCLEOTIDE SEQUENCE [MRNA] OF 2-1164 (ISOFORM 1)</scope>
    <source>
        <tissue>Brain</tissue>
    </source>
</reference>
<reference key="6">
    <citation type="journal article" date="2008" name="J. Proteome Res.">
        <title>Phosphoproteome of resting human platelets.</title>
        <authorList>
            <person name="Zahedi R.P."/>
            <person name="Lewandrowski U."/>
            <person name="Wiesner J."/>
            <person name="Wortelkamp S."/>
            <person name="Moebius J."/>
            <person name="Schuetz C."/>
            <person name="Walter U."/>
            <person name="Gambaryan S."/>
            <person name="Sickmann A."/>
        </authorList>
    </citation>
    <scope>PHOSPHORYLATION [LARGE SCALE ANALYSIS] AT SER-25</scope>
    <scope>IDENTIFICATION BY MASS SPECTROMETRY [LARGE SCALE ANALYSIS]</scope>
    <source>
        <tissue>Platelet</tissue>
    </source>
</reference>
<reference key="7">
    <citation type="journal article" date="2009" name="Sci. Signal.">
        <title>Quantitative phosphoproteomic analysis of T cell receptor signaling reveals system-wide modulation of protein-protein interactions.</title>
        <authorList>
            <person name="Mayya V."/>
            <person name="Lundgren D.H."/>
            <person name="Hwang S.-I."/>
            <person name="Rezaul K."/>
            <person name="Wu L."/>
            <person name="Eng J.K."/>
            <person name="Rodionov V."/>
            <person name="Han D.K."/>
        </authorList>
    </citation>
    <scope>IDENTIFICATION BY MASS SPECTROMETRY [LARGE SCALE ANALYSIS]</scope>
    <source>
        <tissue>Leukemic T-cell</tissue>
    </source>
</reference>
<reference key="8">
    <citation type="journal article" date="2010" name="J. Biol. Chem.">
        <title>Heteromeric interactions required for abundance and subcellular localization of human CDC50 proteins and class 1 P4-ATPases.</title>
        <authorList>
            <person name="van der Velden L.M."/>
            <person name="Wichers C.G."/>
            <person name="van Breevoort A.E."/>
            <person name="Coleman J.A."/>
            <person name="Molday R.S."/>
            <person name="Berger R."/>
            <person name="Klomp L.W."/>
            <person name="van de Graaf S.F."/>
        </authorList>
    </citation>
    <scope>INTERACTION WITH TMEM30A</scope>
    <scope>SUBCELLULAR LOCATION</scope>
</reference>
<reference key="9">
    <citation type="journal article" date="2010" name="J. Biol. Chem.">
        <title>CDC50 proteins are critical components of the human class-1 P4-ATPase transport machinery.</title>
        <authorList>
            <person name="Bryde S."/>
            <person name="Hennrich H."/>
            <person name="Verhulst P.M."/>
            <person name="Devaux P.F."/>
            <person name="Lenoir G."/>
            <person name="Holthuis J.C."/>
        </authorList>
    </citation>
    <scope>INTERACTION WITH TMEM30A AND TMEM30B</scope>
</reference>
<reference key="10">
    <citation type="journal article" date="2011" name="J. Biol. Chem.">
        <title>ATP9B, a P4-ATPase (a putative aminophospholipid translocase), localizes to the trans-Golgi network in a CDC50 protein-independent manner.</title>
        <authorList>
            <person name="Takatsu H."/>
            <person name="Baba K."/>
            <person name="Shima T."/>
            <person name="Umino H."/>
            <person name="Kato U."/>
            <person name="Umeda M."/>
            <person name="Nakayama K."/>
            <person name="Shin H.W."/>
        </authorList>
    </citation>
    <scope>INTERACTION WITH TMEM30A</scope>
    <scope>SUBCELLULAR LOCATION</scope>
</reference>
<reference key="11">
    <citation type="journal article" date="2019" name="Blood Adv.">
        <title>Calpain cleaves phospholipid flippase ATP8A1 during apoptosis in platelets.</title>
        <authorList>
            <person name="Jing W."/>
            <person name="Yabas M."/>
            <person name="Broeer A."/>
            <person name="Coupland L."/>
            <person name="Gardiner E.E."/>
            <person name="Enders A."/>
            <person name="Broeer S."/>
        </authorList>
    </citation>
    <scope>PROCESSING BY CALPAIN</scope>
    <scope>TISSUE SPECIFICITY</scope>
</reference>
<reference evidence="17 18 19 20 21 22 23 24" key="12">
    <citation type="journal article" date="2019" name="Science">
        <title>Cryo-EM structures capture the transport cycle of the P4-ATPase flippase.</title>
        <authorList>
            <person name="Hiraizumi M."/>
            <person name="Yamashita K."/>
            <person name="Nishizawa T."/>
            <person name="Nureki O."/>
        </authorList>
    </citation>
    <scope>STRUCTURE BY ELECTRON MICROSCOPY (2.83 ANGSTROMS) IN COMPLEX WITH TMEM30A; ATP ANALOGS; MAGNESIUM AND INHIBITOR</scope>
    <scope>FUNCTION</scope>
    <scope>CATALYTIC ACTIVITY</scope>
    <scope>COFACTOR</scope>
    <scope>BIOPHYSICOCHEMICAL PROPERTIES</scope>
    <scope>ACTIVITY REGULATION</scope>
    <scope>INTERACTION WITH TMEM30A</scope>
    <scope>ACTIVE SITE</scope>
</reference>
<name>AT8A1_HUMAN</name>
<proteinExistence type="evidence at protein level"/>
<keyword id="KW-0002">3D-structure</keyword>
<keyword id="KW-0025">Alternative splicing</keyword>
<keyword id="KW-0067">ATP-binding</keyword>
<keyword id="KW-1003">Cell membrane</keyword>
<keyword id="KW-0968">Cytoplasmic vesicle</keyword>
<keyword id="KW-0256">Endoplasmic reticulum</keyword>
<keyword id="KW-0333">Golgi apparatus</keyword>
<keyword id="KW-0445">Lipid transport</keyword>
<keyword id="KW-0460">Magnesium</keyword>
<keyword id="KW-0472">Membrane</keyword>
<keyword id="KW-0479">Metal-binding</keyword>
<keyword id="KW-0547">Nucleotide-binding</keyword>
<keyword id="KW-0597">Phosphoprotein</keyword>
<keyword id="KW-1267">Proteomics identification</keyword>
<keyword id="KW-1185">Reference proteome</keyword>
<keyword id="KW-1278">Translocase</keyword>
<keyword id="KW-0812">Transmembrane</keyword>
<keyword id="KW-1133">Transmembrane helix</keyword>
<keyword id="KW-0813">Transport</keyword>
<feature type="chain" id="PRO_0000046360" description="Phospholipid-transporting ATPase IA">
    <location>
        <begin position="1"/>
        <end position="1164"/>
    </location>
</feature>
<feature type="topological domain" description="Cytoplasmic" evidence="6">
    <location>
        <begin position="1"/>
        <end position="65"/>
    </location>
</feature>
<feature type="transmembrane region" description="Helical" evidence="6">
    <location>
        <begin position="66"/>
        <end position="86"/>
    </location>
</feature>
<feature type="topological domain" description="Exoplasmic loop" evidence="6">
    <location>
        <begin position="87"/>
        <end position="92"/>
    </location>
</feature>
<feature type="transmembrane region" description="Helical" evidence="6">
    <location>
        <begin position="93"/>
        <end position="115"/>
    </location>
</feature>
<feature type="topological domain" description="Cytoplasmic" evidence="6">
    <location>
        <begin position="116"/>
        <end position="297"/>
    </location>
</feature>
<feature type="transmembrane region" description="Helical" evidence="6">
    <location>
        <begin position="298"/>
        <end position="319"/>
    </location>
</feature>
<feature type="topological domain" description="Exoplasmic loop" evidence="6">
    <location>
        <begin position="320"/>
        <end position="344"/>
    </location>
</feature>
<feature type="transmembrane region" description="Helical" evidence="6">
    <location>
        <begin position="345"/>
        <end position="366"/>
    </location>
</feature>
<feature type="topological domain" description="Cytoplasmic" evidence="6">
    <location>
        <begin position="367"/>
        <end position="857"/>
    </location>
</feature>
<feature type="transmembrane region" description="Helical" evidence="6">
    <location>
        <begin position="858"/>
        <end position="878"/>
    </location>
</feature>
<feature type="topological domain" description="Exoplasmic loop" evidence="6">
    <location>
        <begin position="879"/>
        <end position="890"/>
    </location>
</feature>
<feature type="transmembrane region" description="Helical" evidence="6">
    <location>
        <begin position="891"/>
        <end position="910"/>
    </location>
</feature>
<feature type="topological domain" description="Cytoplasmic" evidence="6">
    <location>
        <begin position="911"/>
        <end position="940"/>
    </location>
</feature>
<feature type="transmembrane region" description="Helical" evidence="6">
    <location>
        <begin position="941"/>
        <end position="962"/>
    </location>
</feature>
<feature type="topological domain" description="Exoplasmic loop" evidence="6">
    <location>
        <begin position="963"/>
        <end position="976"/>
    </location>
</feature>
<feature type="transmembrane region" description="Helical" evidence="6">
    <location>
        <begin position="977"/>
        <end position="999"/>
    </location>
</feature>
<feature type="topological domain" description="Cytoplasmic" evidence="6">
    <location>
        <begin position="1000"/>
        <end position="1005"/>
    </location>
</feature>
<feature type="transmembrane region" description="Helical" evidence="6">
    <location>
        <begin position="1006"/>
        <end position="1026"/>
    </location>
</feature>
<feature type="topological domain" description="Exoplasmic loop" evidence="6">
    <location>
        <begin position="1027"/>
        <end position="1044"/>
    </location>
</feature>
<feature type="transmembrane region" description="Helical" evidence="6">
    <location>
        <begin position="1045"/>
        <end position="1070"/>
    </location>
</feature>
<feature type="topological domain" description="Cytoplasmic" evidence="6">
    <location>
        <begin position="1071"/>
        <end position="1164"/>
    </location>
</feature>
<feature type="active site" description="4-aspartylphosphate intermediate" evidence="11">
    <location>
        <position position="409"/>
    </location>
</feature>
<feature type="binding site" evidence="11">
    <location>
        <position position="409"/>
    </location>
    <ligand>
        <name>ATP</name>
        <dbReference type="ChEBI" id="CHEBI:30616"/>
    </ligand>
</feature>
<feature type="binding site" evidence="11">
    <location>
        <position position="409"/>
    </location>
    <ligand>
        <name>Mg(2+)</name>
        <dbReference type="ChEBI" id="CHEBI:18420"/>
    </ligand>
</feature>
<feature type="binding site" evidence="11">
    <location>
        <position position="410"/>
    </location>
    <ligand>
        <name>ATP</name>
        <dbReference type="ChEBI" id="CHEBI:30616"/>
    </ligand>
</feature>
<feature type="binding site" evidence="11 20">
    <location>
        <position position="411"/>
    </location>
    <ligand>
        <name>ATP</name>
        <dbReference type="ChEBI" id="CHEBI:30616"/>
    </ligand>
</feature>
<feature type="binding site" evidence="11">
    <location>
        <position position="411"/>
    </location>
    <ligand>
        <name>Mg(2+)</name>
        <dbReference type="ChEBI" id="CHEBI:18420"/>
    </ligand>
</feature>
<feature type="binding site" evidence="3">
    <location>
        <position position="508"/>
    </location>
    <ligand>
        <name>ATP</name>
        <dbReference type="ChEBI" id="CHEBI:30616"/>
    </ligand>
</feature>
<feature type="binding site" evidence="11">
    <location>
        <position position="549"/>
    </location>
    <ligand>
        <name>ATP</name>
        <dbReference type="ChEBI" id="CHEBI:30616"/>
    </ligand>
</feature>
<feature type="binding site" evidence="3">
    <location>
        <position position="572"/>
    </location>
    <ligand>
        <name>ATP</name>
        <dbReference type="ChEBI" id="CHEBI:30616"/>
    </ligand>
</feature>
<feature type="binding site" evidence="3">
    <location>
        <position position="605"/>
    </location>
    <ligand>
        <name>ATP</name>
        <dbReference type="ChEBI" id="CHEBI:30616"/>
    </ligand>
</feature>
<feature type="binding site" evidence="3">
    <location>
        <position position="685"/>
    </location>
    <ligand>
        <name>ATP</name>
        <dbReference type="ChEBI" id="CHEBI:30616"/>
    </ligand>
</feature>
<feature type="binding site" evidence="3">
    <location>
        <position position="686"/>
    </location>
    <ligand>
        <name>ATP</name>
        <dbReference type="ChEBI" id="CHEBI:30616"/>
    </ligand>
</feature>
<feature type="binding site" evidence="3">
    <location>
        <position position="687"/>
    </location>
    <ligand>
        <name>ATP</name>
        <dbReference type="ChEBI" id="CHEBI:30616"/>
    </ligand>
</feature>
<feature type="binding site" evidence="6">
    <location>
        <begin position="741"/>
        <end position="748"/>
    </location>
    <ligand>
        <name>ATP</name>
        <dbReference type="ChEBI" id="CHEBI:30616"/>
    </ligand>
</feature>
<feature type="binding site" evidence="3">
    <location>
        <position position="775"/>
    </location>
    <ligand>
        <name>ATP</name>
        <dbReference type="ChEBI" id="CHEBI:30616"/>
    </ligand>
</feature>
<feature type="binding site" evidence="3">
    <location>
        <position position="781"/>
    </location>
    <ligand>
        <name>ATP</name>
        <dbReference type="ChEBI" id="CHEBI:30616"/>
    </ligand>
</feature>
<feature type="binding site" evidence="11">
    <location>
        <position position="801"/>
    </location>
    <ligand>
        <name>Mg(2+)</name>
        <dbReference type="ChEBI" id="CHEBI:18420"/>
    </ligand>
</feature>
<feature type="binding site" evidence="11">
    <location>
        <position position="804"/>
    </location>
    <ligand>
        <name>ATP</name>
        <dbReference type="ChEBI" id="CHEBI:30616"/>
    </ligand>
</feature>
<feature type="binding site" evidence="11">
    <location>
        <position position="805"/>
    </location>
    <ligand>
        <name>ATP</name>
        <dbReference type="ChEBI" id="CHEBI:30616"/>
    </ligand>
</feature>
<feature type="binding site" evidence="5">
    <location>
        <position position="805"/>
    </location>
    <ligand>
        <name>Mg(2+)</name>
        <dbReference type="ChEBI" id="CHEBI:18420"/>
    </ligand>
</feature>
<feature type="binding site" evidence="6">
    <location>
        <begin position="1095"/>
        <end position="1102"/>
    </location>
    <ligand>
        <name>ATP</name>
        <dbReference type="ChEBI" id="CHEBI:30616"/>
    </ligand>
</feature>
<feature type="site" description="Involved in the recognition of the lipid substrate on the exoplasmic side" evidence="2">
    <location>
        <position position="352"/>
    </location>
</feature>
<feature type="site" description="Involved in the release of the transported lipid into the cytosolic leaflet" evidence="2">
    <location>
        <position position="357"/>
    </location>
</feature>
<feature type="modified residue" description="Phosphoserine" evidence="25">
    <location>
        <position position="25"/>
    </location>
</feature>
<feature type="modified residue" description="Phosphothreonine" evidence="4">
    <location>
        <position position="28"/>
    </location>
</feature>
<feature type="modified residue" description="Phosphoserine" evidence="4">
    <location>
        <position position="29"/>
    </location>
</feature>
<feature type="modified residue" description="Phosphoserine" evidence="4">
    <location>
        <position position="443"/>
    </location>
</feature>
<feature type="modified residue" description="Phosphoserine" evidence="4">
    <location>
        <position position="1126"/>
    </location>
</feature>
<feature type="splice variant" id="VSP_040977" description="In isoform 3." evidence="13">
    <original>AVGEIVKVTNGEHLPADLIS</original>
    <variation>NVGDIVIIKGKEYIPADTVL</variation>
    <location>
        <begin position="152"/>
        <end position="171"/>
    </location>
</feature>
<feature type="splice variant" id="VSP_000431" description="In isoform 2 and isoform 3." evidence="12 13">
    <location>
        <begin position="433"/>
        <end position="447"/>
    </location>
</feature>
<feature type="sequence variant" id="VAR_022003" description="In dbSNP:rs3792687.">
    <original>T</original>
    <variation>M</variation>
    <location>
        <position position="673"/>
    </location>
</feature>
<feature type="sequence conflict" description="In Ref. 4; BAA77248." evidence="14" ref="4">
    <original>E</original>
    <variation>K</variation>
    <location>
        <position position="364"/>
    </location>
</feature>
<feature type="strand" evidence="29">
    <location>
        <begin position="37"/>
        <end position="42"/>
    </location>
</feature>
<feature type="helix" evidence="29">
    <location>
        <begin position="61"/>
        <end position="73"/>
    </location>
</feature>
<feature type="helix" evidence="29">
    <location>
        <begin position="77"/>
        <end position="87"/>
    </location>
</feature>
<feature type="turn" evidence="29">
    <location>
        <begin position="91"/>
        <end position="93"/>
    </location>
</feature>
<feature type="strand" evidence="30">
    <location>
        <begin position="98"/>
        <end position="101"/>
    </location>
</feature>
<feature type="helix" evidence="29">
    <location>
        <begin position="102"/>
        <end position="131"/>
    </location>
</feature>
<feature type="strand" evidence="30">
    <location>
        <begin position="134"/>
        <end position="136"/>
    </location>
</feature>
<feature type="strand" evidence="29">
    <location>
        <begin position="140"/>
        <end position="142"/>
    </location>
</feature>
<feature type="strand" evidence="30">
    <location>
        <begin position="145"/>
        <end position="147"/>
    </location>
</feature>
<feature type="helix" evidence="30">
    <location>
        <begin position="148"/>
        <end position="150"/>
    </location>
</feature>
<feature type="strand" evidence="29">
    <location>
        <begin position="156"/>
        <end position="164"/>
    </location>
</feature>
<feature type="strand" evidence="29">
    <location>
        <begin position="167"/>
        <end position="176"/>
    </location>
</feature>
<feature type="helix" evidence="29">
    <location>
        <begin position="177"/>
        <end position="179"/>
    </location>
</feature>
<feature type="strand" evidence="29">
    <location>
        <begin position="180"/>
        <end position="184"/>
    </location>
</feature>
<feature type="helix" evidence="29">
    <location>
        <begin position="186"/>
        <end position="189"/>
    </location>
</feature>
<feature type="strand" evidence="29">
    <location>
        <begin position="193"/>
        <end position="198"/>
    </location>
</feature>
<feature type="helix" evidence="29">
    <location>
        <begin position="201"/>
        <end position="204"/>
    </location>
</feature>
<feature type="helix" evidence="29">
    <location>
        <begin position="209"/>
        <end position="214"/>
    </location>
</feature>
<feature type="strand" evidence="29">
    <location>
        <begin position="218"/>
        <end position="221"/>
    </location>
</feature>
<feature type="strand" evidence="29">
    <location>
        <begin position="228"/>
        <end position="230"/>
    </location>
</feature>
<feature type="strand" evidence="31">
    <location>
        <begin position="233"/>
        <end position="235"/>
    </location>
</feature>
<feature type="strand" evidence="29">
    <location>
        <begin position="247"/>
        <end position="251"/>
    </location>
</feature>
<feature type="strand" evidence="29">
    <location>
        <begin position="256"/>
        <end position="259"/>
    </location>
</feature>
<feature type="strand" evidence="29">
    <location>
        <begin position="261"/>
        <end position="269"/>
    </location>
</feature>
<feature type="helix" evidence="31">
    <location>
        <begin position="271"/>
        <end position="273"/>
    </location>
</feature>
<feature type="helix" evidence="31">
    <location>
        <begin position="276"/>
        <end position="279"/>
    </location>
</feature>
<feature type="helix" evidence="29">
    <location>
        <begin position="289"/>
        <end position="322"/>
    </location>
</feature>
<feature type="turn" evidence="29">
    <location>
        <begin position="324"/>
        <end position="326"/>
    </location>
</feature>
<feature type="turn" evidence="29">
    <location>
        <begin position="328"/>
        <end position="330"/>
    </location>
</feature>
<feature type="strand" evidence="29">
    <location>
        <begin position="334"/>
        <end position="336"/>
    </location>
</feature>
<feature type="helix" evidence="29">
    <location>
        <begin position="340"/>
        <end position="350"/>
    </location>
</feature>
<feature type="helix" evidence="29">
    <location>
        <begin position="352"/>
        <end position="354"/>
    </location>
</feature>
<feature type="helix" evidence="29">
    <location>
        <begin position="359"/>
        <end position="376"/>
    </location>
</feature>
<feature type="strand" evidence="29">
    <location>
        <begin position="380"/>
        <end position="382"/>
    </location>
</feature>
<feature type="turn" evidence="29">
    <location>
        <begin position="383"/>
        <end position="386"/>
    </location>
</feature>
<feature type="strand" evidence="29">
    <location>
        <begin position="390"/>
        <end position="392"/>
    </location>
</feature>
<feature type="helix" evidence="29">
    <location>
        <begin position="394"/>
        <end position="396"/>
    </location>
</feature>
<feature type="helix" evidence="29">
    <location>
        <begin position="399"/>
        <end position="401"/>
    </location>
</feature>
<feature type="strand" evidence="29">
    <location>
        <begin position="402"/>
        <end position="408"/>
    </location>
</feature>
<feature type="turn" evidence="29">
    <location>
        <begin position="412"/>
        <end position="414"/>
    </location>
</feature>
<feature type="strand" evidence="29">
    <location>
        <begin position="415"/>
        <end position="426"/>
    </location>
</feature>
<feature type="strand" evidence="29">
    <location>
        <begin position="429"/>
        <end position="431"/>
    </location>
</feature>
<feature type="helix" evidence="29">
    <location>
        <begin position="464"/>
        <end position="469"/>
    </location>
</feature>
<feature type="strand" evidence="31">
    <location>
        <begin position="470"/>
        <end position="472"/>
    </location>
</feature>
<feature type="helix" evidence="29">
    <location>
        <begin position="474"/>
        <end position="486"/>
    </location>
</feature>
<feature type="strand" evidence="30">
    <location>
        <begin position="495"/>
        <end position="498"/>
    </location>
</feature>
<feature type="helix" evidence="29">
    <location>
        <begin position="506"/>
        <end position="517"/>
    </location>
</feature>
<feature type="strand" evidence="28">
    <location>
        <begin position="521"/>
        <end position="524"/>
    </location>
</feature>
<feature type="strand" evidence="29">
    <location>
        <begin position="527"/>
        <end position="532"/>
    </location>
</feature>
<feature type="turn" evidence="27">
    <location>
        <begin position="534"/>
        <end position="536"/>
    </location>
</feature>
<feature type="strand" evidence="29">
    <location>
        <begin position="538"/>
        <end position="541"/>
    </location>
</feature>
<feature type="strand" evidence="29">
    <location>
        <begin position="551"/>
        <end position="553"/>
    </location>
</feature>
<feature type="strand" evidence="29">
    <location>
        <begin position="556"/>
        <end position="562"/>
    </location>
</feature>
<feature type="strand" evidence="29">
    <location>
        <begin position="565"/>
        <end position="573"/>
    </location>
</feature>
<feature type="helix" evidence="29">
    <location>
        <begin position="575"/>
        <end position="578"/>
    </location>
</feature>
<feature type="strand" evidence="31">
    <location>
        <begin position="579"/>
        <end position="581"/>
    </location>
</feature>
<feature type="helix" evidence="29">
    <location>
        <begin position="589"/>
        <end position="602"/>
    </location>
</feature>
<feature type="strand" evidence="29">
    <location>
        <begin position="608"/>
        <end position="613"/>
    </location>
</feature>
<feature type="helix" evidence="29">
    <location>
        <begin position="616"/>
        <end position="631"/>
    </location>
</feature>
<feature type="turn" evidence="29">
    <location>
        <begin position="632"/>
        <end position="636"/>
    </location>
</feature>
<feature type="helix" evidence="29">
    <location>
        <begin position="637"/>
        <end position="646"/>
    </location>
</feature>
<feature type="strand" evidence="29">
    <location>
        <begin position="656"/>
        <end position="663"/>
    </location>
</feature>
<feature type="helix" evidence="29">
    <location>
        <begin position="667"/>
        <end position="676"/>
    </location>
</feature>
<feature type="strand" evidence="29">
    <location>
        <begin position="680"/>
        <end position="684"/>
    </location>
</feature>
<feature type="helix" evidence="29">
    <location>
        <begin position="689"/>
        <end position="698"/>
    </location>
</feature>
<feature type="strand" evidence="26">
    <location>
        <begin position="704"/>
        <end position="706"/>
    </location>
</feature>
<feature type="strand" evidence="29">
    <location>
        <begin position="709"/>
        <end position="711"/>
    </location>
</feature>
<feature type="strand" evidence="29">
    <location>
        <begin position="742"/>
        <end position="745"/>
    </location>
</feature>
<feature type="helix" evidence="29">
    <location>
        <begin position="746"/>
        <end position="753"/>
    </location>
</feature>
<feature type="strand" evidence="29">
    <location>
        <begin position="754"/>
        <end position="757"/>
    </location>
</feature>
<feature type="helix" evidence="29">
    <location>
        <begin position="758"/>
        <end position="767"/>
    </location>
</feature>
<feature type="strand" evidence="29">
    <location>
        <begin position="771"/>
        <end position="775"/>
    </location>
</feature>
<feature type="helix" evidence="29">
    <location>
        <begin position="778"/>
        <end position="789"/>
    </location>
</feature>
<feature type="strand" evidence="29">
    <location>
        <begin position="794"/>
        <end position="800"/>
    </location>
</feature>
<feature type="helix" evidence="29">
    <location>
        <begin position="803"/>
        <end position="805"/>
    </location>
</feature>
<feature type="helix" evidence="29">
    <location>
        <begin position="806"/>
        <end position="811"/>
    </location>
</feature>
<feature type="strand" evidence="29">
    <location>
        <begin position="812"/>
        <end position="818"/>
    </location>
</feature>
<feature type="strand" evidence="29">
    <location>
        <begin position="820"/>
        <end position="822"/>
    </location>
</feature>
<feature type="helix" evidence="29">
    <location>
        <begin position="825"/>
        <end position="829"/>
    </location>
</feature>
<feature type="strand" evidence="29">
    <location>
        <begin position="831"/>
        <end position="836"/>
    </location>
</feature>
<feature type="helix" evidence="29">
    <location>
        <begin position="839"/>
        <end position="845"/>
    </location>
</feature>
<feature type="helix" evidence="29">
    <location>
        <begin position="847"/>
        <end position="870"/>
    </location>
</feature>
<feature type="helix" evidence="29">
    <location>
        <begin position="872"/>
        <end position="880"/>
    </location>
</feature>
<feature type="helix" evidence="29">
    <location>
        <begin position="891"/>
        <end position="895"/>
    </location>
</feature>
<feature type="helix" evidence="29">
    <location>
        <begin position="896"/>
        <end position="900"/>
    </location>
</feature>
<feature type="helix" evidence="29">
    <location>
        <begin position="903"/>
        <end position="910"/>
    </location>
</feature>
<feature type="helix" evidence="29">
    <location>
        <begin position="917"/>
        <end position="922"/>
    </location>
</feature>
<feature type="helix" evidence="29">
    <location>
        <begin position="926"/>
        <end position="933"/>
    </location>
</feature>
<feature type="helix" evidence="29">
    <location>
        <begin position="938"/>
        <end position="962"/>
    </location>
</feature>
<feature type="strand" evidence="31">
    <location>
        <begin position="964"/>
        <end position="966"/>
    </location>
</feature>
<feature type="helix" evidence="29">
    <location>
        <begin position="977"/>
        <end position="999"/>
    </location>
</feature>
<feature type="strand" evidence="29">
    <location>
        <begin position="1001"/>
        <end position="1003"/>
    </location>
</feature>
<feature type="helix" evidence="29">
    <location>
        <begin position="1005"/>
        <end position="1025"/>
    </location>
</feature>
<feature type="turn" evidence="29">
    <location>
        <begin position="1029"/>
        <end position="1031"/>
    </location>
</feature>
<feature type="strand" evidence="31">
    <location>
        <begin position="1032"/>
        <end position="1034"/>
    </location>
</feature>
<feature type="helix" evidence="29">
    <location>
        <begin position="1036"/>
        <end position="1038"/>
    </location>
</feature>
<feature type="helix" evidence="29">
    <location>
        <begin position="1041"/>
        <end position="1046"/>
    </location>
</feature>
<feature type="helix" evidence="29">
    <location>
        <begin position="1049"/>
        <end position="1076"/>
    </location>
</feature>
<feature type="turn" evidence="29">
    <location>
        <begin position="1147"/>
        <end position="1149"/>
    </location>
</feature>
<organism>
    <name type="scientific">Homo sapiens</name>
    <name type="common">Human</name>
    <dbReference type="NCBI Taxonomy" id="9606"/>
    <lineage>
        <taxon>Eukaryota</taxon>
        <taxon>Metazoa</taxon>
        <taxon>Chordata</taxon>
        <taxon>Craniata</taxon>
        <taxon>Vertebrata</taxon>
        <taxon>Euteleostomi</taxon>
        <taxon>Mammalia</taxon>
        <taxon>Eutheria</taxon>
        <taxon>Euarchontoglires</taxon>
        <taxon>Primates</taxon>
        <taxon>Haplorrhini</taxon>
        <taxon>Catarrhini</taxon>
        <taxon>Hominidae</taxon>
        <taxon>Homo</taxon>
    </lineage>
</organism>
<gene>
    <name evidence="16" type="primary">ATP8A1</name>
    <name type="synonym">ATPIA</name>
</gene>
<dbReference type="EC" id="7.6.2.1" evidence="4"/>
<dbReference type="EMBL" id="AF067820">
    <property type="protein sequence ID" value="AAD34706.1"/>
    <property type="molecule type" value="mRNA"/>
</dbReference>
<dbReference type="EMBL" id="AC084010">
    <property type="protein sequence ID" value="AAY40980.1"/>
    <property type="molecule type" value="Genomic_DNA"/>
</dbReference>
<dbReference type="EMBL" id="AC096734">
    <property type="protein sequence ID" value="AAY40924.1"/>
    <property type="molecule type" value="Genomic_DNA"/>
</dbReference>
<dbReference type="EMBL" id="AC110788">
    <property type="status" value="NOT_ANNOTATED_CDS"/>
    <property type="molecule type" value="Genomic_DNA"/>
</dbReference>
<dbReference type="EMBL" id="AC139717">
    <property type="status" value="NOT_ANNOTATED_CDS"/>
    <property type="molecule type" value="Genomic_DNA"/>
</dbReference>
<dbReference type="EMBL" id="CH471069">
    <property type="protein sequence ID" value="EAW93003.1"/>
    <property type="molecule type" value="Genomic_DNA"/>
</dbReference>
<dbReference type="EMBL" id="BC109317">
    <property type="protein sequence ID" value="AAI09318.1"/>
    <property type="status" value="ALT_INIT"/>
    <property type="molecule type" value="mRNA"/>
</dbReference>
<dbReference type="EMBL" id="BC109318">
    <property type="protein sequence ID" value="AAI09319.1"/>
    <property type="molecule type" value="mRNA"/>
</dbReference>
<dbReference type="EMBL" id="AB013452">
    <property type="protein sequence ID" value="BAA77248.1"/>
    <property type="status" value="ALT_INIT"/>
    <property type="molecule type" value="mRNA"/>
</dbReference>
<dbReference type="CCDS" id="CCDS3466.1">
    <molecule id="Q9Y2Q0-1"/>
</dbReference>
<dbReference type="CCDS" id="CCDS47049.1">
    <molecule id="Q9Y2Q0-3"/>
</dbReference>
<dbReference type="CCDS" id="CCDS93493.1">
    <molecule id="Q9Y2Q0-2"/>
</dbReference>
<dbReference type="RefSeq" id="NP_001098999.1">
    <molecule id="Q9Y2Q0-3"/>
    <property type="nucleotide sequence ID" value="NM_001105529.1"/>
</dbReference>
<dbReference type="RefSeq" id="NP_001386955.1">
    <molecule id="Q9Y2Q0-2"/>
    <property type="nucleotide sequence ID" value="NM_001400026.1"/>
</dbReference>
<dbReference type="RefSeq" id="NP_006086.1">
    <molecule id="Q9Y2Q0-1"/>
    <property type="nucleotide sequence ID" value="NM_006095.2"/>
</dbReference>
<dbReference type="RefSeq" id="XP_016863134.1">
    <property type="nucleotide sequence ID" value="XM_017007645.1"/>
</dbReference>
<dbReference type="PDB" id="6K7G">
    <property type="method" value="EM"/>
    <property type="resolution" value="3.30 A"/>
    <property type="chains" value="A=1-1164"/>
</dbReference>
<dbReference type="PDB" id="6K7H">
    <property type="method" value="EM"/>
    <property type="resolution" value="3.22 A"/>
    <property type="chains" value="A=1-1164"/>
</dbReference>
<dbReference type="PDB" id="6K7I">
    <property type="method" value="EM"/>
    <property type="resolution" value="3.22 A"/>
    <property type="chains" value="A=1-1164"/>
</dbReference>
<dbReference type="PDB" id="6K7J">
    <property type="method" value="EM"/>
    <property type="resolution" value="3.08 A"/>
    <property type="chains" value="A=1-1164"/>
</dbReference>
<dbReference type="PDB" id="6K7K">
    <property type="method" value="EM"/>
    <property type="resolution" value="3.04 A"/>
    <property type="chains" value="A=1-1164"/>
</dbReference>
<dbReference type="PDB" id="6K7L">
    <property type="method" value="EM"/>
    <property type="resolution" value="2.83 A"/>
    <property type="chains" value="A=1-1164"/>
</dbReference>
<dbReference type="PDB" id="6K7M">
    <property type="method" value="EM"/>
    <property type="resolution" value="2.95 A"/>
    <property type="chains" value="A=1-1164"/>
</dbReference>
<dbReference type="PDB" id="6K7N">
    <property type="method" value="EM"/>
    <property type="resolution" value="2.84 A"/>
    <property type="chains" value="A=1-1164"/>
</dbReference>
<dbReference type="PDBsum" id="6K7G"/>
<dbReference type="PDBsum" id="6K7H"/>
<dbReference type="PDBsum" id="6K7I"/>
<dbReference type="PDBsum" id="6K7J"/>
<dbReference type="PDBsum" id="6K7K"/>
<dbReference type="PDBsum" id="6K7L"/>
<dbReference type="PDBsum" id="6K7M"/>
<dbReference type="PDBsum" id="6K7N"/>
<dbReference type="EMDB" id="EMD-9933"/>
<dbReference type="EMDB" id="EMD-9936"/>
<dbReference type="EMDB" id="EMD-9938"/>
<dbReference type="EMDB" id="EMD-9940"/>
<dbReference type="SMR" id="Q9Y2Q0"/>
<dbReference type="BioGRID" id="115668">
    <property type="interactions" value="15"/>
</dbReference>
<dbReference type="ComplexPortal" id="CPX-6285">
    <property type="entry name" value="ATP8A1-CDC50A P4-ATPase complex"/>
</dbReference>
<dbReference type="ComplexPortal" id="CPX-6286">
    <property type="entry name" value="ATP8A1-CDC50B P4-ATPase complex"/>
</dbReference>
<dbReference type="FunCoup" id="Q9Y2Q0">
    <property type="interactions" value="1875"/>
</dbReference>
<dbReference type="IntAct" id="Q9Y2Q0">
    <property type="interactions" value="8"/>
</dbReference>
<dbReference type="STRING" id="9606.ENSP00000371084"/>
<dbReference type="DrugBank" id="DB00144">
    <property type="generic name" value="Phosphatidyl serine"/>
</dbReference>
<dbReference type="TCDB" id="3.A.3.8.13">
    <property type="family name" value="the p-type atpase (p-atpase) superfamily"/>
</dbReference>
<dbReference type="GlyCosmos" id="Q9Y2Q0">
    <property type="glycosylation" value="2 sites, 1 glycan"/>
</dbReference>
<dbReference type="iPTMnet" id="Q9Y2Q0"/>
<dbReference type="PhosphoSitePlus" id="Q9Y2Q0"/>
<dbReference type="SwissPalm" id="Q9Y2Q0"/>
<dbReference type="BioMuta" id="ATP8A1"/>
<dbReference type="DMDM" id="8134331"/>
<dbReference type="jPOST" id="Q9Y2Q0"/>
<dbReference type="MassIVE" id="Q9Y2Q0"/>
<dbReference type="PaxDb" id="9606-ENSP00000371084"/>
<dbReference type="PeptideAtlas" id="Q9Y2Q0"/>
<dbReference type="ProteomicsDB" id="85858">
    <molecule id="Q9Y2Q0-1"/>
</dbReference>
<dbReference type="ProteomicsDB" id="85859">
    <molecule id="Q9Y2Q0-2"/>
</dbReference>
<dbReference type="ProteomicsDB" id="85860">
    <molecule id="Q9Y2Q0-3"/>
</dbReference>
<dbReference type="Pumba" id="Q9Y2Q0"/>
<dbReference type="Antibodypedia" id="43947">
    <property type="antibodies" value="89 antibodies from 19 providers"/>
</dbReference>
<dbReference type="DNASU" id="10396"/>
<dbReference type="Ensembl" id="ENST00000264449.14">
    <molecule id="Q9Y2Q0-3"/>
    <property type="protein sequence ID" value="ENSP00000264449.10"/>
    <property type="gene ID" value="ENSG00000124406.17"/>
</dbReference>
<dbReference type="Ensembl" id="ENST00000381668.9">
    <molecule id="Q9Y2Q0-1"/>
    <property type="protein sequence ID" value="ENSP00000371084.5"/>
    <property type="gene ID" value="ENSG00000124406.17"/>
</dbReference>
<dbReference type="Ensembl" id="ENST00000700470.1">
    <molecule id="Q9Y2Q0-2"/>
    <property type="protein sequence ID" value="ENSP00000515003.1"/>
    <property type="gene ID" value="ENSG00000124406.17"/>
</dbReference>
<dbReference type="GeneID" id="10396"/>
<dbReference type="KEGG" id="hsa:10396"/>
<dbReference type="MANE-Select" id="ENST00000381668.9">
    <property type="protein sequence ID" value="ENSP00000371084.5"/>
    <property type="RefSeq nucleotide sequence ID" value="NM_006095.2"/>
    <property type="RefSeq protein sequence ID" value="NP_006086.1"/>
</dbReference>
<dbReference type="UCSC" id="uc003gwr.3">
    <molecule id="Q9Y2Q0-1"/>
    <property type="organism name" value="human"/>
</dbReference>
<dbReference type="AGR" id="HGNC:13531"/>
<dbReference type="CTD" id="10396"/>
<dbReference type="DisGeNET" id="10396"/>
<dbReference type="GeneCards" id="ATP8A1"/>
<dbReference type="HGNC" id="HGNC:13531">
    <property type="gene designation" value="ATP8A1"/>
</dbReference>
<dbReference type="HPA" id="ENSG00000124406">
    <property type="expression patterns" value="Tissue enhanced (thyroid)"/>
</dbReference>
<dbReference type="MIM" id="609542">
    <property type="type" value="gene"/>
</dbReference>
<dbReference type="neXtProt" id="NX_Q9Y2Q0"/>
<dbReference type="OpenTargets" id="ENSG00000124406"/>
<dbReference type="PharmGKB" id="PA25165"/>
<dbReference type="VEuPathDB" id="HostDB:ENSG00000124406"/>
<dbReference type="eggNOG" id="KOG0206">
    <property type="taxonomic scope" value="Eukaryota"/>
</dbReference>
<dbReference type="GeneTree" id="ENSGT00940000157110"/>
<dbReference type="HOGENOM" id="CLU_000846_3_0_1"/>
<dbReference type="InParanoid" id="Q9Y2Q0"/>
<dbReference type="OMA" id="MHSFWSW"/>
<dbReference type="OrthoDB" id="377733at2759"/>
<dbReference type="PAN-GO" id="Q9Y2Q0">
    <property type="GO annotations" value="4 GO annotations based on evolutionary models"/>
</dbReference>
<dbReference type="PhylomeDB" id="Q9Y2Q0"/>
<dbReference type="TreeFam" id="TF300654"/>
<dbReference type="BRENDA" id="7.6.2.1">
    <property type="organism ID" value="2681"/>
</dbReference>
<dbReference type="PathwayCommons" id="Q9Y2Q0"/>
<dbReference type="Reactome" id="R-HSA-6798695">
    <property type="pathway name" value="Neutrophil degranulation"/>
</dbReference>
<dbReference type="Reactome" id="R-HSA-936837">
    <property type="pathway name" value="Ion transport by P-type ATPases"/>
</dbReference>
<dbReference type="SignaLink" id="Q9Y2Q0"/>
<dbReference type="BioGRID-ORCS" id="10396">
    <property type="hits" value="9 hits in 1157 CRISPR screens"/>
</dbReference>
<dbReference type="CD-CODE" id="FB4E32DD">
    <property type="entry name" value="Presynaptic clusters and postsynaptic densities"/>
</dbReference>
<dbReference type="ChiTaRS" id="ATP8A1">
    <property type="organism name" value="human"/>
</dbReference>
<dbReference type="GenomeRNAi" id="10396"/>
<dbReference type="Pharos" id="Q9Y2Q0">
    <property type="development level" value="Tbio"/>
</dbReference>
<dbReference type="PRO" id="PR:Q9Y2Q0"/>
<dbReference type="Proteomes" id="UP000005640">
    <property type="component" value="Chromosome 4"/>
</dbReference>
<dbReference type="RNAct" id="Q9Y2Q0">
    <property type="molecule type" value="protein"/>
</dbReference>
<dbReference type="Bgee" id="ENSG00000124406">
    <property type="expression patterns" value="Expressed in Brodmann (1909) area 23 and 204 other cell types or tissues"/>
</dbReference>
<dbReference type="ExpressionAtlas" id="Q9Y2Q0">
    <property type="expression patterns" value="baseline and differential"/>
</dbReference>
<dbReference type="GO" id="GO:0035577">
    <property type="term" value="C:azurophil granule membrane"/>
    <property type="evidence" value="ECO:0000304"/>
    <property type="project" value="Reactome"/>
</dbReference>
<dbReference type="GO" id="GO:0042584">
    <property type="term" value="C:chromaffin granule membrane"/>
    <property type="evidence" value="ECO:0007669"/>
    <property type="project" value="UniProtKB-SubCell"/>
</dbReference>
<dbReference type="GO" id="GO:0031410">
    <property type="term" value="C:cytoplasmic vesicle"/>
    <property type="evidence" value="ECO:0000250"/>
    <property type="project" value="UniProtKB"/>
</dbReference>
<dbReference type="GO" id="GO:0005829">
    <property type="term" value="C:cytosol"/>
    <property type="evidence" value="ECO:0000314"/>
    <property type="project" value="HPA"/>
</dbReference>
<dbReference type="GO" id="GO:0005783">
    <property type="term" value="C:endoplasmic reticulum"/>
    <property type="evidence" value="ECO:0000314"/>
    <property type="project" value="UniProtKB"/>
</dbReference>
<dbReference type="GO" id="GO:0070062">
    <property type="term" value="C:extracellular exosome"/>
    <property type="evidence" value="ECO:0007005"/>
    <property type="project" value="UniProtKB"/>
</dbReference>
<dbReference type="GO" id="GO:0098978">
    <property type="term" value="C:glutamatergic synapse"/>
    <property type="evidence" value="ECO:0007669"/>
    <property type="project" value="Ensembl"/>
</dbReference>
<dbReference type="GO" id="GO:0005794">
    <property type="term" value="C:Golgi apparatus"/>
    <property type="evidence" value="ECO:0000314"/>
    <property type="project" value="UniProtKB"/>
</dbReference>
<dbReference type="GO" id="GO:0043231">
    <property type="term" value="C:intracellular membrane-bounded organelle"/>
    <property type="evidence" value="ECO:0000314"/>
    <property type="project" value="HPA"/>
</dbReference>
<dbReference type="GO" id="GO:0016020">
    <property type="term" value="C:membrane"/>
    <property type="evidence" value="ECO:0007005"/>
    <property type="project" value="UniProtKB"/>
</dbReference>
<dbReference type="GO" id="GO:0031090">
    <property type="term" value="C:organelle membrane"/>
    <property type="evidence" value="ECO:0000250"/>
    <property type="project" value="UniProtKB"/>
</dbReference>
<dbReference type="GO" id="GO:1990531">
    <property type="term" value="C:phospholipid-translocating ATPase complex"/>
    <property type="evidence" value="ECO:0000314"/>
    <property type="project" value="UniProtKB"/>
</dbReference>
<dbReference type="GO" id="GO:0005886">
    <property type="term" value="C:plasma membrane"/>
    <property type="evidence" value="ECO:0000314"/>
    <property type="project" value="UniProtKB"/>
</dbReference>
<dbReference type="GO" id="GO:0035579">
    <property type="term" value="C:specific granule membrane"/>
    <property type="evidence" value="ECO:0000304"/>
    <property type="project" value="Reactome"/>
</dbReference>
<dbReference type="GO" id="GO:0030672">
    <property type="term" value="C:synaptic vesicle membrane"/>
    <property type="evidence" value="ECO:0007669"/>
    <property type="project" value="Ensembl"/>
</dbReference>
<dbReference type="GO" id="GO:0005802">
    <property type="term" value="C:trans-Golgi network"/>
    <property type="evidence" value="ECO:0000318"/>
    <property type="project" value="GO_Central"/>
</dbReference>
<dbReference type="GO" id="GO:0005524">
    <property type="term" value="F:ATP binding"/>
    <property type="evidence" value="ECO:0007669"/>
    <property type="project" value="UniProtKB-KW"/>
</dbReference>
<dbReference type="GO" id="GO:0016887">
    <property type="term" value="F:ATP hydrolysis activity"/>
    <property type="evidence" value="ECO:0007669"/>
    <property type="project" value="InterPro"/>
</dbReference>
<dbReference type="GO" id="GO:0140326">
    <property type="term" value="F:ATPase-coupled intramembrane lipid transporter activity"/>
    <property type="evidence" value="ECO:0000318"/>
    <property type="project" value="GO_Central"/>
</dbReference>
<dbReference type="GO" id="GO:0019829">
    <property type="term" value="F:ATPase-coupled monoatomic cation transmembrane transporter activity"/>
    <property type="evidence" value="ECO:0000303"/>
    <property type="project" value="UniProtKB"/>
</dbReference>
<dbReference type="GO" id="GO:0000287">
    <property type="term" value="F:magnesium ion binding"/>
    <property type="evidence" value="ECO:0007669"/>
    <property type="project" value="InterPro"/>
</dbReference>
<dbReference type="GO" id="GO:0140346">
    <property type="term" value="F:phosphatidylserine flippase activity"/>
    <property type="evidence" value="ECO:0000314"/>
    <property type="project" value="UniProtKB"/>
</dbReference>
<dbReference type="GO" id="GO:0090556">
    <property type="term" value="F:phosphatidylserine floppase activity"/>
    <property type="evidence" value="ECO:0007669"/>
    <property type="project" value="RHEA"/>
</dbReference>
<dbReference type="GO" id="GO:0140331">
    <property type="term" value="P:aminophospholipid translocation"/>
    <property type="evidence" value="ECO:0000314"/>
    <property type="project" value="UniProtKB"/>
</dbReference>
<dbReference type="GO" id="GO:0007612">
    <property type="term" value="P:learning"/>
    <property type="evidence" value="ECO:0007669"/>
    <property type="project" value="Ensembl"/>
</dbReference>
<dbReference type="GO" id="GO:0034220">
    <property type="term" value="P:monoatomic ion transmembrane transport"/>
    <property type="evidence" value="ECO:0000304"/>
    <property type="project" value="Reactome"/>
</dbReference>
<dbReference type="GO" id="GO:0045332">
    <property type="term" value="P:phospholipid translocation"/>
    <property type="evidence" value="ECO:0000318"/>
    <property type="project" value="GO_Central"/>
</dbReference>
<dbReference type="GO" id="GO:0030335">
    <property type="term" value="P:positive regulation of cell migration"/>
    <property type="evidence" value="ECO:0007669"/>
    <property type="project" value="Ensembl"/>
</dbReference>
<dbReference type="GO" id="GO:0061092">
    <property type="term" value="P:positive regulation of phospholipid translocation"/>
    <property type="evidence" value="ECO:0007669"/>
    <property type="project" value="Ensembl"/>
</dbReference>
<dbReference type="GO" id="GO:0048488">
    <property type="term" value="P:synaptic vesicle endocytosis"/>
    <property type="evidence" value="ECO:0007669"/>
    <property type="project" value="Ensembl"/>
</dbReference>
<dbReference type="GO" id="GO:0150104">
    <property type="term" value="P:transport across blood-brain barrier"/>
    <property type="evidence" value="ECO:0000303"/>
    <property type="project" value="ARUK-UCL"/>
</dbReference>
<dbReference type="CDD" id="cd02073">
    <property type="entry name" value="P-type_ATPase_APLT_Dnf-like"/>
    <property type="match status" value="1"/>
</dbReference>
<dbReference type="FunFam" id="2.70.150.10:FF:000021">
    <property type="entry name" value="Phospholipid-transporting ATPase"/>
    <property type="match status" value="1"/>
</dbReference>
<dbReference type="FunFam" id="3.40.1110.10:FF:000266">
    <property type="entry name" value="Phospholipid-transporting ATPase"/>
    <property type="match status" value="1"/>
</dbReference>
<dbReference type="FunFam" id="3.40.50.1000:FF:000010">
    <property type="entry name" value="Phospholipid-transporting ATPase"/>
    <property type="match status" value="1"/>
</dbReference>
<dbReference type="Gene3D" id="3.40.1110.10">
    <property type="entry name" value="Calcium-transporting ATPase, cytoplasmic domain N"/>
    <property type="match status" value="1"/>
</dbReference>
<dbReference type="Gene3D" id="2.70.150.10">
    <property type="entry name" value="Calcium-transporting ATPase, cytoplasmic transduction domain A"/>
    <property type="match status" value="1"/>
</dbReference>
<dbReference type="Gene3D" id="3.40.50.1000">
    <property type="entry name" value="HAD superfamily/HAD-like"/>
    <property type="match status" value="1"/>
</dbReference>
<dbReference type="InterPro" id="IPR023299">
    <property type="entry name" value="ATPase_P-typ_cyto_dom_N"/>
</dbReference>
<dbReference type="InterPro" id="IPR018303">
    <property type="entry name" value="ATPase_P-typ_P_site"/>
</dbReference>
<dbReference type="InterPro" id="IPR023298">
    <property type="entry name" value="ATPase_P-typ_TM_dom_sf"/>
</dbReference>
<dbReference type="InterPro" id="IPR008250">
    <property type="entry name" value="ATPase_P-typ_transduc_dom_A_sf"/>
</dbReference>
<dbReference type="InterPro" id="IPR036412">
    <property type="entry name" value="HAD-like_sf"/>
</dbReference>
<dbReference type="InterPro" id="IPR023214">
    <property type="entry name" value="HAD_sf"/>
</dbReference>
<dbReference type="InterPro" id="IPR006539">
    <property type="entry name" value="P-type_ATPase_IV"/>
</dbReference>
<dbReference type="InterPro" id="IPR032631">
    <property type="entry name" value="P-type_ATPase_N"/>
</dbReference>
<dbReference type="InterPro" id="IPR001757">
    <property type="entry name" value="P_typ_ATPase"/>
</dbReference>
<dbReference type="InterPro" id="IPR032630">
    <property type="entry name" value="P_typ_ATPase_c"/>
</dbReference>
<dbReference type="InterPro" id="IPR044492">
    <property type="entry name" value="P_typ_ATPase_HD_dom"/>
</dbReference>
<dbReference type="NCBIfam" id="TIGR01652">
    <property type="entry name" value="ATPase-Plipid"/>
    <property type="match status" value="1"/>
</dbReference>
<dbReference type="NCBIfam" id="TIGR01494">
    <property type="entry name" value="ATPase_P-type"/>
    <property type="match status" value="3"/>
</dbReference>
<dbReference type="PANTHER" id="PTHR24092:SF221">
    <property type="entry name" value="PHOSPHOLIPID-TRANSPORTING ATPASE IA"/>
    <property type="match status" value="1"/>
</dbReference>
<dbReference type="PANTHER" id="PTHR24092">
    <property type="entry name" value="PROBABLE PHOSPHOLIPID-TRANSPORTING ATPASE"/>
    <property type="match status" value="1"/>
</dbReference>
<dbReference type="Pfam" id="PF13246">
    <property type="entry name" value="Cation_ATPase"/>
    <property type="match status" value="1"/>
</dbReference>
<dbReference type="Pfam" id="PF00122">
    <property type="entry name" value="E1-E2_ATPase"/>
    <property type="match status" value="1"/>
</dbReference>
<dbReference type="Pfam" id="PF16212">
    <property type="entry name" value="PhoLip_ATPase_C"/>
    <property type="match status" value="1"/>
</dbReference>
<dbReference type="Pfam" id="PF16209">
    <property type="entry name" value="PhoLip_ATPase_N"/>
    <property type="match status" value="1"/>
</dbReference>
<dbReference type="PRINTS" id="PR00119">
    <property type="entry name" value="CATATPASE"/>
</dbReference>
<dbReference type="SFLD" id="SFLDS00003">
    <property type="entry name" value="Haloacid_Dehalogenase"/>
    <property type="match status" value="1"/>
</dbReference>
<dbReference type="SFLD" id="SFLDF00027">
    <property type="entry name" value="p-type_atpase"/>
    <property type="match status" value="1"/>
</dbReference>
<dbReference type="SUPFAM" id="SSF81653">
    <property type="entry name" value="Calcium ATPase, transduction domain A"/>
    <property type="match status" value="1"/>
</dbReference>
<dbReference type="SUPFAM" id="SSF81665">
    <property type="entry name" value="Calcium ATPase, transmembrane domain M"/>
    <property type="match status" value="1"/>
</dbReference>
<dbReference type="SUPFAM" id="SSF56784">
    <property type="entry name" value="HAD-like"/>
    <property type="match status" value="1"/>
</dbReference>
<dbReference type="SUPFAM" id="SSF81660">
    <property type="entry name" value="Metal cation-transporting ATPase, ATP-binding domain N"/>
    <property type="match status" value="1"/>
</dbReference>
<dbReference type="PROSITE" id="PS00154">
    <property type="entry name" value="ATPASE_E1_E2"/>
    <property type="match status" value="1"/>
</dbReference>
<accession>Q9Y2Q0</accession>
<accession>Q32M35</accession>
<accession>Q32M36</accession>
<accession>Q4W5J7</accession>
<accession>Q4W5P2</accession>
<evidence type="ECO:0000250" key="1"/>
<evidence type="ECO:0000250" key="2">
    <source>
        <dbReference type="UniProtKB" id="C7EXK4"/>
    </source>
</evidence>
<evidence type="ECO:0000250" key="3">
    <source>
        <dbReference type="UniProtKB" id="P04191"/>
    </source>
</evidence>
<evidence type="ECO:0000250" key="4">
    <source>
        <dbReference type="UniProtKB" id="P70704"/>
    </source>
</evidence>
<evidence type="ECO:0000250" key="5">
    <source>
        <dbReference type="UniProtKB" id="Q8NB49"/>
    </source>
</evidence>
<evidence type="ECO:0000255" key="6"/>
<evidence type="ECO:0000269" key="7">
    <source>
    </source>
</evidence>
<evidence type="ECO:0000269" key="8">
    <source>
    </source>
</evidence>
<evidence type="ECO:0000269" key="9">
    <source>
    </source>
</evidence>
<evidence type="ECO:0000269" key="10">
    <source>
    </source>
</evidence>
<evidence type="ECO:0000269" key="11">
    <source>
    </source>
</evidence>
<evidence type="ECO:0000303" key="12">
    <source>
    </source>
</evidence>
<evidence type="ECO:0000303" key="13">
    <source>
    </source>
</evidence>
<evidence type="ECO:0000305" key="14"/>
<evidence type="ECO:0000305" key="15">
    <source>
    </source>
</evidence>
<evidence type="ECO:0000312" key="16">
    <source>
        <dbReference type="HGNC" id="HGNC:13531"/>
    </source>
</evidence>
<evidence type="ECO:0007744" key="17">
    <source>
        <dbReference type="PDB" id="6K7G"/>
    </source>
</evidence>
<evidence type="ECO:0007744" key="18">
    <source>
        <dbReference type="PDB" id="6K7H"/>
    </source>
</evidence>
<evidence type="ECO:0007744" key="19">
    <source>
        <dbReference type="PDB" id="6K7I"/>
    </source>
</evidence>
<evidence type="ECO:0007744" key="20">
    <source>
        <dbReference type="PDB" id="6K7J"/>
    </source>
</evidence>
<evidence type="ECO:0007744" key="21">
    <source>
        <dbReference type="PDB" id="6K7K"/>
    </source>
</evidence>
<evidence type="ECO:0007744" key="22">
    <source>
        <dbReference type="PDB" id="6K7L"/>
    </source>
</evidence>
<evidence type="ECO:0007744" key="23">
    <source>
        <dbReference type="PDB" id="6K7M"/>
    </source>
</evidence>
<evidence type="ECO:0007744" key="24">
    <source>
        <dbReference type="PDB" id="6K7N"/>
    </source>
</evidence>
<evidence type="ECO:0007744" key="25">
    <source>
    </source>
</evidence>
<evidence type="ECO:0007829" key="26">
    <source>
        <dbReference type="PDB" id="6K7H"/>
    </source>
</evidence>
<evidence type="ECO:0007829" key="27">
    <source>
        <dbReference type="PDB" id="6K7J"/>
    </source>
</evidence>
<evidence type="ECO:0007829" key="28">
    <source>
        <dbReference type="PDB" id="6K7K"/>
    </source>
</evidence>
<evidence type="ECO:0007829" key="29">
    <source>
        <dbReference type="PDB" id="6K7L"/>
    </source>
</evidence>
<evidence type="ECO:0007829" key="30">
    <source>
        <dbReference type="PDB" id="6K7M"/>
    </source>
</evidence>
<evidence type="ECO:0007829" key="31">
    <source>
        <dbReference type="PDB" id="6K7N"/>
    </source>
</evidence>
<comment type="function">
    <text evidence="4 11">Catalytic component of a P4-ATPase flippase complex which catalyzes the hydrolysis of ATP coupled to the transport of aminophospholipids from the outer to the inner leaflet of various membranes and ensures the maintenance of asymmetric distribution of phospholipids (PubMed:31416931). Phospholipid translocation also seems to be implicated in vesicle formation and in uptake of lipid signaling molecules. In vitro, its ATPase activity is selectively and stereospecifically stimulated by phosphatidylserine (PS) (PubMed:31416931). The flippase complex ATP8A1:TMEM30A seems to play a role in regulation of cell migration probably involving flippase-mediated translocation of phosphatidylethanolamine (PE) at the cell membrane (By similarity). Acts as aminophospholipid translocase at the cell membrane in neuronal cells (By similarity).</text>
</comment>
<comment type="catalytic activity">
    <reaction evidence="11">
        <text>ATP + H2O + phospholipidSide 1 = ADP + phosphate + phospholipidSide 2.</text>
        <dbReference type="EC" id="7.6.2.1"/>
    </reaction>
</comment>
<comment type="catalytic activity">
    <reaction evidence="11">
        <text>a 1,2-diacyl-sn-glycero-3-phospho-L-serine(out) + ATP + H2O = a 1,2-diacyl-sn-glycero-3-phospho-L-serine(in) + ADP + phosphate + H(+)</text>
        <dbReference type="Rhea" id="RHEA:38567"/>
        <dbReference type="ChEBI" id="CHEBI:15377"/>
        <dbReference type="ChEBI" id="CHEBI:15378"/>
        <dbReference type="ChEBI" id="CHEBI:30616"/>
        <dbReference type="ChEBI" id="CHEBI:43474"/>
        <dbReference type="ChEBI" id="CHEBI:57262"/>
        <dbReference type="ChEBI" id="CHEBI:456216"/>
    </reaction>
    <physiologicalReaction direction="left-to-right" evidence="15">
        <dbReference type="Rhea" id="RHEA:38568"/>
    </physiologicalReaction>
</comment>
<comment type="cofactor">
    <cofactor evidence="11">
        <name>Mg(2+)</name>
        <dbReference type="ChEBI" id="CHEBI:18420"/>
    </cofactor>
</comment>
<comment type="activity regulation">
    <text evidence="1 11">ATPase activity is stimulated by phosphatidylserine (PS) and minimally by phosphatidylethanolamine (PE). ATPase activity is inhibited by beryllium fluoride and aluminum trifluoride (PubMed:31416931).</text>
</comment>
<comment type="biophysicochemical properties">
    <kinetics>
        <KM evidence="11">111 uM for 1-palmitoyl-2-oleoyl-sn-glycero-3-phospho-L-serine (POPS)</KM>
        <Vmax evidence="11">99.7 nmol/min/ug enzyme toward ATP</Vmax>
    </kinetics>
</comment>
<comment type="subunit">
    <text evidence="7 8 9 11">Component of a P4-ATPase flippase complex which consists of a catalytic alpha subunit and an accessory beta subunit (PubMed:31416931). Interacts with TMEM30A to form a flippase complex; this complex forms an intermediate phosphoenzyme (PubMed:20947505, PubMed:20961850, PubMed:21914794, PubMed:31416931). Interacts with TMEM30B; this interaction is reported conflictingly (PubMed:20961850).</text>
</comment>
<comment type="interaction">
    <interactant intactId="EBI-9539324">
        <id>Q9Y2Q0</id>
    </interactant>
    <interactant intactId="EBI-2836942">
        <id>Q9NV96</id>
        <label>TMEM30A</label>
    </interactant>
    <organismsDiffer>false</organismsDiffer>
    <experiments>5</experiments>
</comment>
<comment type="interaction">
    <interactant intactId="EBI-21654619">
        <id>Q9Y2Q0-2</id>
    </interactant>
    <interactant intactId="EBI-2836942">
        <id>Q9NV96</id>
        <label>TMEM30A</label>
    </interactant>
    <organismsDiffer>false</organismsDiffer>
    <experiments>2</experiments>
</comment>
<comment type="subcellular location">
    <subcellularLocation>
        <location evidence="4">Cytoplasmic vesicle</location>
        <location evidence="4">Secretory vesicle</location>
        <location evidence="4">Chromaffin granule membrane</location>
        <topology evidence="4">Multi-pass membrane protein</topology>
    </subcellularLocation>
    <subcellularLocation>
        <location evidence="7">Cytoplasmic granule</location>
    </subcellularLocation>
    <subcellularLocation>
        <location evidence="7 9">Cell membrane</location>
    </subcellularLocation>
    <subcellularLocation>
        <location evidence="7 9">Endoplasmic reticulum</location>
    </subcellularLocation>
    <subcellularLocation>
        <location evidence="7 9">Golgi apparatus</location>
    </subcellularLocation>
    <text evidence="4 7">Exit from the endoplasmic reticulum requires the presence of TMEM30A, but not TMEM30B (PubMed:20947505). In the presence of TMEM30A, predominantly located in cytoplasmic punctate structures and localizes to the cell membrane (PubMed:20947505). Localizes to plasma membranes of red blood cells (By similarity).</text>
</comment>
<comment type="alternative products">
    <event type="alternative splicing"/>
    <isoform>
        <id>Q9Y2Q0-1</id>
        <name>1</name>
        <name>Long</name>
        <sequence type="displayed"/>
    </isoform>
    <isoform>
        <id>Q9Y2Q0-2</id>
        <name>2</name>
        <name>Short</name>
        <sequence type="described" ref="VSP_000431"/>
    </isoform>
    <isoform>
        <id>Q9Y2Q0-3</id>
        <name>3</name>
        <sequence type="described" ref="VSP_040977 VSP_000431"/>
    </isoform>
</comment>
<comment type="tissue specificity">
    <text evidence="10">Found in most adult tissues except liver, testis and placenta. Most abundant in heart, brain and skeletal muscle. Also detected in fetal tissues. Isoform 1 is only detected in brain, skeletal muscle and heart and is the most abundant form in skeletal muscle. Highly expressed in platelets (PubMed:30674456).</text>
</comment>
<comment type="PTM">
    <text evidence="10">Cleaved by calpain in a caspase- and calcium influx-dependent manner during platelet apoptosis leading to a 100 kDa polypeptide.</text>
</comment>
<comment type="similarity">
    <text evidence="14">Belongs to the cation transport ATPase (P-type) (TC 3.A.3) family. Type IV subfamily.</text>
</comment>
<comment type="sequence caution" evidence="14">
    <conflict type="erroneous initiation">
        <sequence resource="EMBL-CDS" id="AAI09318"/>
    </conflict>
    <text>Truncated N-terminus.</text>
</comment>
<comment type="sequence caution" evidence="14">
    <conflict type="erroneous initiation">
        <sequence resource="EMBL-CDS" id="BAA77248"/>
    </conflict>
    <text>Truncated N-terminus.</text>
</comment>